<protein>
    <recommendedName>
        <fullName evidence="1">Acetylornithine deacetylase</fullName>
        <shortName evidence="1">AO</shortName>
        <shortName evidence="1">Acetylornithinase</shortName>
        <ecNumber evidence="1">3.5.1.16</ecNumber>
    </recommendedName>
    <alternativeName>
        <fullName evidence="1">N-acetylornithinase</fullName>
        <shortName evidence="1">NAO</shortName>
    </alternativeName>
</protein>
<accession>B1IVC1</accession>
<comment type="function">
    <text evidence="1">Catalyzes the hydrolysis of the amide bond of N(2)-acetylated L-amino acids. Cleaves the acetyl group from N-acetyl-L-ornithine to form L-ornithine, an intermediate in L-arginine biosynthesis pathway, and a branchpoint in the synthesis of polyamines.</text>
</comment>
<comment type="catalytic activity">
    <reaction evidence="1">
        <text>N(2)-acetyl-L-ornithine + H2O = L-ornithine + acetate</text>
        <dbReference type="Rhea" id="RHEA:15941"/>
        <dbReference type="ChEBI" id="CHEBI:15377"/>
        <dbReference type="ChEBI" id="CHEBI:30089"/>
        <dbReference type="ChEBI" id="CHEBI:46911"/>
        <dbReference type="ChEBI" id="CHEBI:57805"/>
        <dbReference type="EC" id="3.5.1.16"/>
    </reaction>
</comment>
<comment type="cofactor">
    <cofactor evidence="1">
        <name>Zn(2+)</name>
        <dbReference type="ChEBI" id="CHEBI:29105"/>
    </cofactor>
    <cofactor evidence="1">
        <name>Co(2+)</name>
        <dbReference type="ChEBI" id="CHEBI:48828"/>
    </cofactor>
    <text evidence="1">Binds 2 Zn(2+) or Co(2+) ions per subunit.</text>
</comment>
<comment type="cofactor">
    <cofactor evidence="1">
        <name>glutathione</name>
        <dbReference type="ChEBI" id="CHEBI:57925"/>
    </cofactor>
</comment>
<comment type="pathway">
    <text evidence="1">Amino-acid biosynthesis; L-arginine biosynthesis; L-ornithine from N(2)-acetyl-L-ornithine (linear): step 1/1.</text>
</comment>
<comment type="subunit">
    <text evidence="1">Homodimer.</text>
</comment>
<comment type="subcellular location">
    <subcellularLocation>
        <location evidence="1">Cytoplasm</location>
    </subcellularLocation>
</comment>
<comment type="similarity">
    <text evidence="1">Belongs to the peptidase M20A family. ArgE subfamily.</text>
</comment>
<evidence type="ECO:0000255" key="1">
    <source>
        <dbReference type="HAMAP-Rule" id="MF_01108"/>
    </source>
</evidence>
<gene>
    <name evidence="1" type="primary">argE</name>
    <name type="ordered locus">EcolC_4059</name>
</gene>
<sequence>MKNKLPPFIEIYRALIATPSISATEEALDQSNADLITLLADWFKDLGFNVEVQPVPGTRNKFNMLASIGQGAGGLLLAGHTDTVPFDDGRWTRDPFTLTEHDGKLYGLGTADMKGFFAFILDALRDVDVTKLKKPLYILATADEETSMAGARYFAETTALRPDCAIIGEPTSLQPVRAHKGHISNAIRIQGQSGHSSDPARGVNAIELMHDAIGHILQLRDNLKERYHYEAFTVPYPTLNLGHIHGGDASNRICACCELHMDIRPLPGMTLNELNGLLNDALAPVSERWPGRLTVDELHPPIPGYECPPNHQLVEVVEKLLGAKTEVVNYCTEAPFIQTLCPTLVLGPGSINQAHQPDEYLETRFIKPTRELITQVIHHFCWH</sequence>
<name>ARGE_ECOLC</name>
<keyword id="KW-0028">Amino-acid biosynthesis</keyword>
<keyword id="KW-0055">Arginine biosynthesis</keyword>
<keyword id="KW-0170">Cobalt</keyword>
<keyword id="KW-0963">Cytoplasm</keyword>
<keyword id="KW-0378">Hydrolase</keyword>
<keyword id="KW-0479">Metal-binding</keyword>
<keyword id="KW-0862">Zinc</keyword>
<dbReference type="EC" id="3.5.1.16" evidence="1"/>
<dbReference type="EMBL" id="CP000946">
    <property type="protein sequence ID" value="ACA79658.1"/>
    <property type="molecule type" value="Genomic_DNA"/>
</dbReference>
<dbReference type="RefSeq" id="WP_001298964.1">
    <property type="nucleotide sequence ID" value="NZ_MTFT01000042.1"/>
</dbReference>
<dbReference type="SMR" id="B1IVC1"/>
<dbReference type="MEROPS" id="M20.974"/>
<dbReference type="KEGG" id="ecl:EcolC_4059"/>
<dbReference type="HOGENOM" id="CLU_021802_2_4_6"/>
<dbReference type="UniPathway" id="UPA00068">
    <property type="reaction ID" value="UER00110"/>
</dbReference>
<dbReference type="GO" id="GO:0005737">
    <property type="term" value="C:cytoplasm"/>
    <property type="evidence" value="ECO:0007669"/>
    <property type="project" value="UniProtKB-SubCell"/>
</dbReference>
<dbReference type="GO" id="GO:0008777">
    <property type="term" value="F:acetylornithine deacetylase activity"/>
    <property type="evidence" value="ECO:0007669"/>
    <property type="project" value="UniProtKB-UniRule"/>
</dbReference>
<dbReference type="GO" id="GO:0008270">
    <property type="term" value="F:zinc ion binding"/>
    <property type="evidence" value="ECO:0007669"/>
    <property type="project" value="UniProtKB-UniRule"/>
</dbReference>
<dbReference type="GO" id="GO:0006526">
    <property type="term" value="P:L-arginine biosynthetic process"/>
    <property type="evidence" value="ECO:0007669"/>
    <property type="project" value="UniProtKB-UniRule"/>
</dbReference>
<dbReference type="CDD" id="cd03894">
    <property type="entry name" value="M20_ArgE"/>
    <property type="match status" value="1"/>
</dbReference>
<dbReference type="FunFam" id="3.30.70.360:FF:000003">
    <property type="entry name" value="Acetylornithine deacetylase"/>
    <property type="match status" value="1"/>
</dbReference>
<dbReference type="Gene3D" id="3.30.70.360">
    <property type="match status" value="1"/>
</dbReference>
<dbReference type="Gene3D" id="3.40.630.10">
    <property type="entry name" value="Zn peptidases"/>
    <property type="match status" value="1"/>
</dbReference>
<dbReference type="HAMAP" id="MF_01108">
    <property type="entry name" value="ArgE"/>
    <property type="match status" value="1"/>
</dbReference>
<dbReference type="InterPro" id="IPR010169">
    <property type="entry name" value="AcOrn-deacetyl"/>
</dbReference>
<dbReference type="InterPro" id="IPR001261">
    <property type="entry name" value="ArgE/DapE_CS"/>
</dbReference>
<dbReference type="InterPro" id="IPR036264">
    <property type="entry name" value="Bact_exopeptidase_dim_dom"/>
</dbReference>
<dbReference type="InterPro" id="IPR002933">
    <property type="entry name" value="Peptidase_M20"/>
</dbReference>
<dbReference type="InterPro" id="IPR011650">
    <property type="entry name" value="Peptidase_M20_dimer"/>
</dbReference>
<dbReference type="InterPro" id="IPR050072">
    <property type="entry name" value="Peptidase_M20A"/>
</dbReference>
<dbReference type="NCBIfam" id="TIGR01892">
    <property type="entry name" value="AcOrn-deacetyl"/>
    <property type="match status" value="1"/>
</dbReference>
<dbReference type="NCBIfam" id="NF003474">
    <property type="entry name" value="PRK05111.1"/>
    <property type="match status" value="1"/>
</dbReference>
<dbReference type="PANTHER" id="PTHR43808">
    <property type="entry name" value="ACETYLORNITHINE DEACETYLASE"/>
    <property type="match status" value="1"/>
</dbReference>
<dbReference type="PANTHER" id="PTHR43808:SF1">
    <property type="entry name" value="ACETYLORNITHINE DEACETYLASE"/>
    <property type="match status" value="1"/>
</dbReference>
<dbReference type="Pfam" id="PF07687">
    <property type="entry name" value="M20_dimer"/>
    <property type="match status" value="1"/>
</dbReference>
<dbReference type="Pfam" id="PF01546">
    <property type="entry name" value="Peptidase_M20"/>
    <property type="match status" value="1"/>
</dbReference>
<dbReference type="SUPFAM" id="SSF55031">
    <property type="entry name" value="Bacterial exopeptidase dimerisation domain"/>
    <property type="match status" value="1"/>
</dbReference>
<dbReference type="SUPFAM" id="SSF53187">
    <property type="entry name" value="Zn-dependent exopeptidases"/>
    <property type="match status" value="1"/>
</dbReference>
<dbReference type="PROSITE" id="PS00758">
    <property type="entry name" value="ARGE_DAPE_CPG2_1"/>
    <property type="match status" value="1"/>
</dbReference>
<dbReference type="PROSITE" id="PS00759">
    <property type="entry name" value="ARGE_DAPE_CPG2_2"/>
    <property type="match status" value="1"/>
</dbReference>
<organism>
    <name type="scientific">Escherichia coli (strain ATCC 8739 / DSM 1576 / NBRC 3972 / NCIMB 8545 / WDCM 00012 / Crooks)</name>
    <dbReference type="NCBI Taxonomy" id="481805"/>
    <lineage>
        <taxon>Bacteria</taxon>
        <taxon>Pseudomonadati</taxon>
        <taxon>Pseudomonadota</taxon>
        <taxon>Gammaproteobacteria</taxon>
        <taxon>Enterobacterales</taxon>
        <taxon>Enterobacteriaceae</taxon>
        <taxon>Escherichia</taxon>
    </lineage>
</organism>
<proteinExistence type="inferred from homology"/>
<feature type="chain" id="PRO_1000084829" description="Acetylornithine deacetylase">
    <location>
        <begin position="1"/>
        <end position="383"/>
    </location>
</feature>
<feature type="active site" evidence="1">
    <location>
        <position position="82"/>
    </location>
</feature>
<feature type="active site" evidence="1">
    <location>
        <position position="144"/>
    </location>
</feature>
<feature type="binding site" evidence="1">
    <location>
        <position position="80"/>
    </location>
    <ligand>
        <name>Zn(2+)</name>
        <dbReference type="ChEBI" id="CHEBI:29105"/>
        <label>1</label>
    </ligand>
</feature>
<feature type="binding site" evidence="1">
    <location>
        <position position="112"/>
    </location>
    <ligand>
        <name>Zn(2+)</name>
        <dbReference type="ChEBI" id="CHEBI:29105"/>
        <label>1</label>
    </ligand>
</feature>
<feature type="binding site" evidence="1">
    <location>
        <position position="112"/>
    </location>
    <ligand>
        <name>Zn(2+)</name>
        <dbReference type="ChEBI" id="CHEBI:29105"/>
        <label>2</label>
    </ligand>
</feature>
<feature type="binding site" evidence="1">
    <location>
        <position position="145"/>
    </location>
    <ligand>
        <name>Zn(2+)</name>
        <dbReference type="ChEBI" id="CHEBI:29105"/>
        <label>2</label>
    </ligand>
</feature>
<feature type="binding site" evidence="1">
    <location>
        <position position="169"/>
    </location>
    <ligand>
        <name>Zn(2+)</name>
        <dbReference type="ChEBI" id="CHEBI:29105"/>
        <label>1</label>
    </ligand>
</feature>
<feature type="binding site" evidence="1">
    <location>
        <position position="355"/>
    </location>
    <ligand>
        <name>Zn(2+)</name>
        <dbReference type="ChEBI" id="CHEBI:29105"/>
        <label>2</label>
    </ligand>
</feature>
<reference key="1">
    <citation type="submission" date="2008-02" db="EMBL/GenBank/DDBJ databases">
        <title>Complete sequence of Escherichia coli C str. ATCC 8739.</title>
        <authorList>
            <person name="Copeland A."/>
            <person name="Lucas S."/>
            <person name="Lapidus A."/>
            <person name="Glavina del Rio T."/>
            <person name="Dalin E."/>
            <person name="Tice H."/>
            <person name="Bruce D."/>
            <person name="Goodwin L."/>
            <person name="Pitluck S."/>
            <person name="Kiss H."/>
            <person name="Brettin T."/>
            <person name="Detter J.C."/>
            <person name="Han C."/>
            <person name="Kuske C.R."/>
            <person name="Schmutz J."/>
            <person name="Larimer F."/>
            <person name="Land M."/>
            <person name="Hauser L."/>
            <person name="Kyrpides N."/>
            <person name="Mikhailova N."/>
            <person name="Ingram L."/>
            <person name="Richardson P."/>
        </authorList>
    </citation>
    <scope>NUCLEOTIDE SEQUENCE [LARGE SCALE GENOMIC DNA]</scope>
    <source>
        <strain>ATCC 8739 / DSM 1576 / NBRC 3972 / NCIMB 8545 / WDCM 00012 / Crooks</strain>
    </source>
</reference>